<evidence type="ECO:0000255" key="1">
    <source>
        <dbReference type="HAMAP-Rule" id="MF_00730"/>
    </source>
</evidence>
<feature type="chain" id="PRO_1000045925" description="Nucleoid-associated protein ESA_01050">
    <location>
        <begin position="1"/>
        <end position="334"/>
    </location>
</feature>
<sequence>MSLDINQIALHQLIKRDEQNLELILRDSLLEPGNTVTEMMAELHRVYSAKSKAYGLFNEESELAEALRQCRRGDEDFLAFSRAATGRLRDELAKYPFAEGGIVLFCHYRYLAVEYLLVAVLNNLSSMRVNEQLDISTTHYLDINHADIVARIDLTEWETNPESTRYLTFLKGRVGRKVADFFMDFLGASVGLDTKAQNRGLLQALDDFTAEAQLDKAERQNVRAQVYSYCNEQLQAGEEIALSELSKELPSFGEKSFQEFTAEQGYELEETFPADRSTLRQLTKYAGSGGGLTINFDAMLLGERIFWDPATDTLTIKGTPPNLRDQLQRRTSGK</sequence>
<organism>
    <name type="scientific">Cronobacter sakazakii (strain ATCC BAA-894)</name>
    <name type="common">Enterobacter sakazakii</name>
    <dbReference type="NCBI Taxonomy" id="290339"/>
    <lineage>
        <taxon>Bacteria</taxon>
        <taxon>Pseudomonadati</taxon>
        <taxon>Pseudomonadota</taxon>
        <taxon>Gammaproteobacteria</taxon>
        <taxon>Enterobacterales</taxon>
        <taxon>Enterobacteriaceae</taxon>
        <taxon>Cronobacter</taxon>
    </lineage>
</organism>
<reference key="1">
    <citation type="journal article" date="2010" name="PLoS ONE">
        <title>Genome sequence of Cronobacter sakazakii BAA-894 and comparative genomic hybridization analysis with other Cronobacter species.</title>
        <authorList>
            <person name="Kucerova E."/>
            <person name="Clifton S.W."/>
            <person name="Xia X.Q."/>
            <person name="Long F."/>
            <person name="Porwollik S."/>
            <person name="Fulton L."/>
            <person name="Fronick C."/>
            <person name="Minx P."/>
            <person name="Kyung K."/>
            <person name="Warren W."/>
            <person name="Fulton R."/>
            <person name="Feng D."/>
            <person name="Wollam A."/>
            <person name="Shah N."/>
            <person name="Bhonagiri V."/>
            <person name="Nash W.E."/>
            <person name="Hallsworth-Pepin K."/>
            <person name="Wilson R.K."/>
            <person name="McClelland M."/>
            <person name="Forsythe S.J."/>
        </authorList>
    </citation>
    <scope>NUCLEOTIDE SEQUENCE [LARGE SCALE GENOMIC DNA]</scope>
    <source>
        <strain>ATCC BAA-894</strain>
    </source>
</reference>
<name>NDPA_CROS8</name>
<accession>A7MLM9</accession>
<keyword id="KW-0963">Cytoplasm</keyword>
<keyword id="KW-1185">Reference proteome</keyword>
<gene>
    <name type="ordered locus">ESA_01050</name>
</gene>
<dbReference type="EMBL" id="CP000783">
    <property type="protein sequence ID" value="ABU76318.1"/>
    <property type="molecule type" value="Genomic_DNA"/>
</dbReference>
<dbReference type="SMR" id="A7MLM9"/>
<dbReference type="KEGG" id="esa:ESA_01050"/>
<dbReference type="PATRIC" id="fig|290339.8.peg.929"/>
<dbReference type="HOGENOM" id="CLU_063050_0_1_6"/>
<dbReference type="Proteomes" id="UP000000260">
    <property type="component" value="Chromosome"/>
</dbReference>
<dbReference type="GO" id="GO:0043590">
    <property type="term" value="C:bacterial nucleoid"/>
    <property type="evidence" value="ECO:0007669"/>
    <property type="project" value="TreeGrafter"/>
</dbReference>
<dbReference type="GO" id="GO:0005737">
    <property type="term" value="C:cytoplasm"/>
    <property type="evidence" value="ECO:0007669"/>
    <property type="project" value="UniProtKB-UniRule"/>
</dbReference>
<dbReference type="GO" id="GO:0003690">
    <property type="term" value="F:double-stranded DNA binding"/>
    <property type="evidence" value="ECO:0007669"/>
    <property type="project" value="TreeGrafter"/>
</dbReference>
<dbReference type="GO" id="GO:0003727">
    <property type="term" value="F:single-stranded RNA binding"/>
    <property type="evidence" value="ECO:0007669"/>
    <property type="project" value="TreeGrafter"/>
</dbReference>
<dbReference type="HAMAP" id="MF_00730">
    <property type="entry name" value="NdpA"/>
    <property type="match status" value="1"/>
</dbReference>
<dbReference type="InterPro" id="IPR007358">
    <property type="entry name" value="Nucleoid_associated_NdpA"/>
</dbReference>
<dbReference type="NCBIfam" id="NF001557">
    <property type="entry name" value="PRK00378.1"/>
    <property type="match status" value="1"/>
</dbReference>
<dbReference type="PANTHER" id="PTHR38772">
    <property type="match status" value="1"/>
</dbReference>
<dbReference type="PANTHER" id="PTHR38772:SF1">
    <property type="entry name" value="NUCLEOID-ASSOCIATED PROTEIN YEJK"/>
    <property type="match status" value="1"/>
</dbReference>
<dbReference type="Pfam" id="PF04245">
    <property type="entry name" value="NA37"/>
    <property type="match status" value="1"/>
</dbReference>
<proteinExistence type="inferred from homology"/>
<comment type="subcellular location">
    <subcellularLocation>
        <location evidence="1">Cytoplasm</location>
        <location evidence="1">Nucleoid</location>
    </subcellularLocation>
</comment>
<comment type="similarity">
    <text evidence="1">Belongs to the YejK family.</text>
</comment>
<protein>
    <recommendedName>
        <fullName evidence="1">Nucleoid-associated protein ESA_01050</fullName>
    </recommendedName>
</protein>